<sequence>MKPEPRTLPPSPNWYCSRCSDAAPGGIFGFAARTSVFLVRVGPGAGASPGAPPFRVVGELVGHTERVSGFTFSHHPGQYNLCATSSDDGTVKVWDVETKTVVTEHTLHQHTISALHWSPTVKDLIVSGDEKGVVFCYWLNRNDSQHLFTEPRTIFCLTCSPHHENLVAIGYKDGIVVIIDISKKGEVIHRLRGHDDEIHSIAWCPLSGEDCLSISQEENSEEPDIPNGKLIAETPITKGCYLATGSKDQTIRIWSCSRGRGVMVLKLPFLKRRSGGVDPTVKERLWLTLHWPKNQPTQLVSSCFGGELLLWDLTQSWRRKYTLFSTSAEGHNHSRIVFNLCSLKTEDGKQLLLSTSMDRDVKCWDMATLECCWTLPSLGGFAYSLAFSPVDVGSLAIGVGDGMIRVWNTLSIKNNYDVKNFWQGVKSKVTALCWHPNKEGCLAFGTDDGKVGLYDTCSNKPPQISSTYHKKTVYRLAWGPPVPPMSLGGEGDRPSLTLYSCGGEGVVLQHNPWKLSGEAFDINKLVRDTNSIRYKLPVHTEISWKGDGKVLALGNEDGSIEIFQVPNLRLLCTIQQHHKLVNAIVWHHEHGSRPELSCLLASGSNNAVIYVHNLKAVLESNPESPITITEPYRTLSGHTAKITSLAWSPHHDGRLVSACYDGTAQVWDALREEPLFNFRGHRGRLLCVAWSPVDPECIYSGADDFCVYRWLTSMQDHSRPPQGKKCIELEKKRLSQFKPKLKKKKKPTLRLPVKQDSSVGNEDESVKENSGPAENGLSDQDGEEEAQEPELPPSPVVCVEPVSCTDICSGFEKSKVTVSSKATSLKKEPAKEKPEALLKKRKARSMLPLSTSLDHRSKEELHRDCLVLATATHAKAELNEDVSADLEERFHLGLFTDRATLYRMMETEGKGHLESGHPELFHQLMLWKGDLKGVLQAAAERGELTDSLVAVAPVAGYSVWLWAVEAFAKQLCFQDQYVKAASYLLSIHKVYEAVELLKSNHLYREAIAVAKARLRPEDPVLKELYLSWGSILERDGHYAIAAKCYLGATSAYDAAKVLARKGDAASLRTAAELAAIAGEHELAASLALRCAQELLLMKNWVGAQEALGLHESLQGQRLVFCLLELLCRHLEEKQPLEVRGPSSIYHQWATGSEGTLVQRVTGVWRSAFSVDTPEQCQAALQKLQDVKYPSATSNTPFRQLLLHVCHDLTLAMLSQQAAAWEEAVPALLQAVVRSYTSGNFTLMQEIYSAFLPGGCDHLRDKLGDLSPAMAAYKSLEAFCIYGQLYEVWWSLCGPGPESSVWVLSAESTVSDKQSKPEDSASAEDMEQPPGPGPRLSAESERLLSACKELFSERHASLQTSQRTVAEVQETLAEMIRQHQKSQLCKATTNGPSRDEPSRDEPSQEAERAPSQPPSPTEERNAPVSLPELTRRLTEANERIAEFPESVKAWPFPDVLECCLVLLHIGSQCPDAVDPEMQQQAQELLHKYGHTRAYRRHCQSRHT</sequence>
<protein>
    <recommendedName>
        <fullName>Gem-associated protein 5</fullName>
        <shortName>Gemin5</shortName>
    </recommendedName>
</protein>
<dbReference type="EMBL" id="AK049216">
    <property type="protein sequence ID" value="BAC33614.1"/>
    <property type="molecule type" value="mRNA"/>
</dbReference>
<dbReference type="EMBL" id="AK143536">
    <property type="protein sequence ID" value="BAE25423.1"/>
    <property type="molecule type" value="mRNA"/>
</dbReference>
<dbReference type="EMBL" id="AL672182">
    <property type="status" value="NOT_ANNOTATED_CDS"/>
    <property type="molecule type" value="Genomic_DNA"/>
</dbReference>
<dbReference type="CCDS" id="CCDS24723.1"/>
<dbReference type="RefSeq" id="NP_001160141.1">
    <property type="nucleotide sequence ID" value="NM_001166669.1"/>
</dbReference>
<dbReference type="RefSeq" id="NP_001160142.1">
    <property type="nucleotide sequence ID" value="NM_001166670.1"/>
</dbReference>
<dbReference type="RefSeq" id="NP_001160143.1">
    <property type="nucleotide sequence ID" value="NM_001166671.1"/>
</dbReference>
<dbReference type="RefSeq" id="NP_766146.2">
    <property type="nucleotide sequence ID" value="NM_172558.3"/>
</dbReference>
<dbReference type="SMR" id="Q8BX17"/>
<dbReference type="BioGRID" id="229781">
    <property type="interactions" value="5"/>
</dbReference>
<dbReference type="FunCoup" id="Q8BX17">
    <property type="interactions" value="4241"/>
</dbReference>
<dbReference type="IntAct" id="Q8BX17">
    <property type="interactions" value="6"/>
</dbReference>
<dbReference type="MINT" id="Q8BX17"/>
<dbReference type="STRING" id="10090.ENSMUSP00000131842"/>
<dbReference type="GlyGen" id="Q8BX17">
    <property type="glycosylation" value="2 sites, 1 O-linked glycan (1 site)"/>
</dbReference>
<dbReference type="iPTMnet" id="Q8BX17"/>
<dbReference type="PhosphoSitePlus" id="Q8BX17"/>
<dbReference type="SwissPalm" id="Q8BX17"/>
<dbReference type="jPOST" id="Q8BX17"/>
<dbReference type="PaxDb" id="10090-ENSMUSP00000036603"/>
<dbReference type="PeptideAtlas" id="Q8BX17"/>
<dbReference type="ProteomicsDB" id="263351"/>
<dbReference type="Pumba" id="Q8BX17"/>
<dbReference type="Antibodypedia" id="28334">
    <property type="antibodies" value="71 antibodies from 18 providers"/>
</dbReference>
<dbReference type="DNASU" id="216766"/>
<dbReference type="Ensembl" id="ENSMUST00000035604.13">
    <property type="protein sequence ID" value="ENSMUSP00000036603.7"/>
    <property type="gene ID" value="ENSMUSG00000037275.15"/>
</dbReference>
<dbReference type="GeneID" id="216766"/>
<dbReference type="KEGG" id="mmu:216766"/>
<dbReference type="UCSC" id="uc007jan.2">
    <property type="organism name" value="mouse"/>
</dbReference>
<dbReference type="AGR" id="MGI:2449311"/>
<dbReference type="CTD" id="25929"/>
<dbReference type="MGI" id="MGI:2449311">
    <property type="gene designation" value="Gemin5"/>
</dbReference>
<dbReference type="VEuPathDB" id="HostDB:ENSMUSG00000037275"/>
<dbReference type="eggNOG" id="ENOG502QPYZ">
    <property type="taxonomic scope" value="Eukaryota"/>
</dbReference>
<dbReference type="GeneTree" id="ENSGT00620000088064"/>
<dbReference type="InParanoid" id="Q8BX17"/>
<dbReference type="OMA" id="YWFNRND"/>
<dbReference type="OrthoDB" id="7326421at2759"/>
<dbReference type="TreeFam" id="TF328886"/>
<dbReference type="Reactome" id="R-MMU-191859">
    <property type="pathway name" value="snRNP Assembly"/>
</dbReference>
<dbReference type="BioGRID-ORCS" id="216766">
    <property type="hits" value="12 hits in 46 CRISPR screens"/>
</dbReference>
<dbReference type="ChiTaRS" id="Gemin5">
    <property type="organism name" value="mouse"/>
</dbReference>
<dbReference type="PRO" id="PR:Q8BX17"/>
<dbReference type="Proteomes" id="UP000000589">
    <property type="component" value="Chromosome 11"/>
</dbReference>
<dbReference type="RNAct" id="Q8BX17">
    <property type="molecule type" value="protein"/>
</dbReference>
<dbReference type="Bgee" id="ENSMUSG00000037275">
    <property type="expression patterns" value="Expressed in spermatocyte and 202 other cell types or tissues"/>
</dbReference>
<dbReference type="ExpressionAtlas" id="Q8BX17">
    <property type="expression patterns" value="baseline and differential"/>
</dbReference>
<dbReference type="GO" id="GO:0005829">
    <property type="term" value="C:cytosol"/>
    <property type="evidence" value="ECO:0000250"/>
    <property type="project" value="UniProtKB"/>
</dbReference>
<dbReference type="GO" id="GO:0097504">
    <property type="term" value="C:Gemini of Cajal bodies"/>
    <property type="evidence" value="ECO:0000250"/>
    <property type="project" value="UniProtKB"/>
</dbReference>
<dbReference type="GO" id="GO:0032797">
    <property type="term" value="C:SMN complex"/>
    <property type="evidence" value="ECO:0000250"/>
    <property type="project" value="UniProtKB"/>
</dbReference>
<dbReference type="GO" id="GO:0034718">
    <property type="term" value="C:SMN-Gemin2 complex"/>
    <property type="evidence" value="ECO:0000250"/>
    <property type="project" value="UniProtKB"/>
</dbReference>
<dbReference type="GO" id="GO:0034719">
    <property type="term" value="C:SMN-Sm protein complex"/>
    <property type="evidence" value="ECO:0000250"/>
    <property type="project" value="UniProtKB"/>
</dbReference>
<dbReference type="GO" id="GO:0003730">
    <property type="term" value="F:mRNA 3'-UTR binding"/>
    <property type="evidence" value="ECO:0000314"/>
    <property type="project" value="UniProtKB"/>
</dbReference>
<dbReference type="GO" id="GO:0043022">
    <property type="term" value="F:ribosome binding"/>
    <property type="evidence" value="ECO:0000250"/>
    <property type="project" value="UniProtKB"/>
</dbReference>
<dbReference type="GO" id="GO:0000340">
    <property type="term" value="F:RNA 7-methylguanosine cap binding"/>
    <property type="evidence" value="ECO:0000250"/>
    <property type="project" value="UniProtKB"/>
</dbReference>
<dbReference type="GO" id="GO:0017069">
    <property type="term" value="F:snRNA binding"/>
    <property type="evidence" value="ECO:0000250"/>
    <property type="project" value="UniProtKB"/>
</dbReference>
<dbReference type="GO" id="GO:0030619">
    <property type="term" value="F:U1 snRNA binding"/>
    <property type="evidence" value="ECO:0000250"/>
    <property type="project" value="UniProtKB"/>
</dbReference>
<dbReference type="GO" id="GO:0030621">
    <property type="term" value="F:U4 snRNA binding"/>
    <property type="evidence" value="ECO:0000250"/>
    <property type="project" value="UniProtKB"/>
</dbReference>
<dbReference type="GO" id="GO:0006417">
    <property type="term" value="P:regulation of translation"/>
    <property type="evidence" value="ECO:0000250"/>
    <property type="project" value="UniProtKB"/>
</dbReference>
<dbReference type="GO" id="GO:0000387">
    <property type="term" value="P:spliceosomal snRNP assembly"/>
    <property type="evidence" value="ECO:0000250"/>
    <property type="project" value="UniProtKB"/>
</dbReference>
<dbReference type="GO" id="GO:0006412">
    <property type="term" value="P:translation"/>
    <property type="evidence" value="ECO:0007669"/>
    <property type="project" value="UniProtKB-KW"/>
</dbReference>
<dbReference type="FunFam" id="2.130.10.10:FF:000213">
    <property type="entry name" value="gem-associated protein 5 isoform X1"/>
    <property type="match status" value="1"/>
</dbReference>
<dbReference type="FunFam" id="2.130.10.10:FF:000221">
    <property type="entry name" value="gem-associated protein 5 isoform X1"/>
    <property type="match status" value="1"/>
</dbReference>
<dbReference type="Gene3D" id="2.130.10.10">
    <property type="entry name" value="YVTN repeat-like/Quinoprotein amine dehydrogenase"/>
    <property type="match status" value="2"/>
</dbReference>
<dbReference type="InterPro" id="IPR056432">
    <property type="entry name" value="Beta-prop_GEMI5_1st"/>
</dbReference>
<dbReference type="InterPro" id="IPR056424">
    <property type="entry name" value="Beta-prop_GEMI5_2nd"/>
</dbReference>
<dbReference type="InterPro" id="IPR020472">
    <property type="entry name" value="G-protein_beta_WD-40_rep"/>
</dbReference>
<dbReference type="InterPro" id="IPR056420">
    <property type="entry name" value="GEMI5_RBS"/>
</dbReference>
<dbReference type="InterPro" id="IPR052640">
    <property type="entry name" value="Gemin-5"/>
</dbReference>
<dbReference type="InterPro" id="IPR011047">
    <property type="entry name" value="Quinoprotein_ADH-like_sf"/>
</dbReference>
<dbReference type="InterPro" id="IPR056421">
    <property type="entry name" value="TPR_GEMI5"/>
</dbReference>
<dbReference type="InterPro" id="IPR015943">
    <property type="entry name" value="WD40/YVTN_repeat-like_dom_sf"/>
</dbReference>
<dbReference type="InterPro" id="IPR019775">
    <property type="entry name" value="WD40_repeat_CS"/>
</dbReference>
<dbReference type="InterPro" id="IPR036322">
    <property type="entry name" value="WD40_repeat_dom_sf"/>
</dbReference>
<dbReference type="InterPro" id="IPR001680">
    <property type="entry name" value="WD40_rpt"/>
</dbReference>
<dbReference type="PANTHER" id="PTHR46362">
    <property type="entry name" value="GEM-ASSOCIATED PROTEIN 5"/>
    <property type="match status" value="1"/>
</dbReference>
<dbReference type="PANTHER" id="PTHR46362:SF1">
    <property type="entry name" value="GEM-ASSOCIATED PROTEIN 5"/>
    <property type="match status" value="1"/>
</dbReference>
<dbReference type="Pfam" id="PF23770">
    <property type="entry name" value="Beta-prop_RIG_1st"/>
    <property type="match status" value="1"/>
</dbReference>
<dbReference type="Pfam" id="PF23775">
    <property type="entry name" value="Beta-prop_RIG_2nd"/>
    <property type="match status" value="1"/>
</dbReference>
<dbReference type="Pfam" id="PF23777">
    <property type="entry name" value="GEMI5_RBS"/>
    <property type="match status" value="1"/>
</dbReference>
<dbReference type="Pfam" id="PF23774">
    <property type="entry name" value="TPR_GEMI5"/>
    <property type="match status" value="1"/>
</dbReference>
<dbReference type="Pfam" id="PF00400">
    <property type="entry name" value="WD40"/>
    <property type="match status" value="1"/>
</dbReference>
<dbReference type="PRINTS" id="PR00320">
    <property type="entry name" value="GPROTEINBRPT"/>
</dbReference>
<dbReference type="SMART" id="SM00320">
    <property type="entry name" value="WD40"/>
    <property type="match status" value="13"/>
</dbReference>
<dbReference type="SUPFAM" id="SSF50998">
    <property type="entry name" value="Quinoprotein alcohol dehydrogenase-like"/>
    <property type="match status" value="1"/>
</dbReference>
<dbReference type="SUPFAM" id="SSF50978">
    <property type="entry name" value="WD40 repeat-like"/>
    <property type="match status" value="1"/>
</dbReference>
<dbReference type="PROSITE" id="PS00678">
    <property type="entry name" value="WD_REPEATS_1"/>
    <property type="match status" value="3"/>
</dbReference>
<dbReference type="PROSITE" id="PS50082">
    <property type="entry name" value="WD_REPEATS_2"/>
    <property type="match status" value="3"/>
</dbReference>
<dbReference type="PROSITE" id="PS50294">
    <property type="entry name" value="WD_REPEATS_REGION"/>
    <property type="match status" value="1"/>
</dbReference>
<gene>
    <name type="primary">Gemin5</name>
</gene>
<organism>
    <name type="scientific">Mus musculus</name>
    <name type="common">Mouse</name>
    <dbReference type="NCBI Taxonomy" id="10090"/>
    <lineage>
        <taxon>Eukaryota</taxon>
        <taxon>Metazoa</taxon>
        <taxon>Chordata</taxon>
        <taxon>Craniata</taxon>
        <taxon>Vertebrata</taxon>
        <taxon>Euteleostomi</taxon>
        <taxon>Mammalia</taxon>
        <taxon>Eutheria</taxon>
        <taxon>Euarchontoglires</taxon>
        <taxon>Glires</taxon>
        <taxon>Rodentia</taxon>
        <taxon>Myomorpha</taxon>
        <taxon>Muroidea</taxon>
        <taxon>Muridae</taxon>
        <taxon>Murinae</taxon>
        <taxon>Mus</taxon>
        <taxon>Mus</taxon>
    </lineage>
</organism>
<comment type="function">
    <text evidence="1 4">The SMN complex catalyzes the assembly of small nuclear ribonucleoproteins (snRNPs), the building blocks of the spliceosome, and thereby plays an important role in the splicing of cellular pre-mRNAs. Most spliceosomal snRNPs contain a common set of Sm proteins SNRPB, SNRPD1, SNRPD2, SNRPD3, SNRPE, SNRPF and SNRPG that assemble in a heptameric protein ring on the Sm site of the small nuclear RNA to form the core snRNP (Sm core). In the cytosol, the Sm proteins SNRPD1, SNRPD2, SNRPE, SNRPF and SNRPG are trapped in an inactive 6S pICln-Sm complex by the chaperone CLNS1A that controls the assembly of the core snRNP. To assemble core snRNPs, the SMN complex accepts the trapped 5Sm proteins from CLNS1A forming an intermediate. Binding of snRNA inside 5Sm ultimately triggers eviction of the SMN complex, thereby allowing binding of SNRPD3 and SNRPB to complete assembly of the core snRNP. Within the SMN complex, GEMIN5 recognizes and delivers the small nuclear RNAs (snRNAs) to the SMN complex. Binds to the 7-methylguanosine cap of RNA molecules (By similarity). Binds to the 3'-UTR of SMN1 mRNA and regulates its translation; does not affect mRNA stability (PubMed:25911097). May play a role in the regulation of protein synthesis via its interaction with ribosomes (By similarity).</text>
</comment>
<comment type="subunit">
    <text evidence="1">Part of the core SMN complex that contains SMN1, GEMIN2/SIP1, DDX20/GEMIN3, GEMIN4, GEMIN5, GEMIN6, GEMIN7, GEMIN8 and STRAP/UNRIP. Part of the SMN-Sm complex that contains SMN1, GEMIN2/SIP1, DDX20/GEMIN3, GEMIN4, GEMIN5, GEMIN6, GEMIN7, GEMIN8, STRAP/UNRIP and the Sm proteins SNRPB, SNRPD1, SNRPD2, SNRPD3, SNRPE, SNRPF and SNRPG. Interacts directly with SMN1, SNRPB, SNRPD1, SNRPD2, SNRPD3 and SNRPE. Identified in a SMN complex that contains GEMIN2/SIP1. Interacts with cytosolic DDX20/GEMIN3 and GEMIN4. Interacts with SNRNP70 and HNRNPU. Identified in a complex with 80S ribosomes; binds to the 60S large ribosomal subunit. Interacts with the ribosomal subunits RPL3 and RPL4.</text>
</comment>
<comment type="subcellular location">
    <subcellularLocation>
        <location evidence="1">Nucleus</location>
        <location evidence="1">Nucleoplasm</location>
    </subcellularLocation>
    <subcellularLocation>
        <location evidence="1">Nucleus</location>
        <location evidence="1">Gem</location>
    </subcellularLocation>
    <subcellularLocation>
        <location evidence="1">Cytoplasm</location>
    </subcellularLocation>
    <text evidence="1">Found both in the nucleoplasm and in nuclear bodies called gems (Gemini of Cajal bodies) that are often in proximity to Cajal (coiled) bodies. Also found in the cytoplasm.</text>
</comment>
<comment type="domain">
    <text evidence="1">The WD repeat domain mediates binding to U1 snRNA and to U4 snRNA. The WD repeat domain also mediates binding to the 7-methylguanosine cap that is found both on mRNA and snRNA molecules. The regions that bind snRNA molecules and the isolated 7-methylguanosine cap overlap at least partially. Besides, the WD repeat domain mediates interaction with the 60S large ribosomal subunit.</text>
</comment>
<comment type="similarity">
    <text evidence="5">Belongs to the WD repeat gemin-5 family.</text>
</comment>
<accession>Q8BX17</accession>
<accession>Q3UPH2</accession>
<reference key="1">
    <citation type="journal article" date="2005" name="Science">
        <title>The transcriptional landscape of the mammalian genome.</title>
        <authorList>
            <person name="Carninci P."/>
            <person name="Kasukawa T."/>
            <person name="Katayama S."/>
            <person name="Gough J."/>
            <person name="Frith M.C."/>
            <person name="Maeda N."/>
            <person name="Oyama R."/>
            <person name="Ravasi T."/>
            <person name="Lenhard B."/>
            <person name="Wells C."/>
            <person name="Kodzius R."/>
            <person name="Shimokawa K."/>
            <person name="Bajic V.B."/>
            <person name="Brenner S.E."/>
            <person name="Batalov S."/>
            <person name="Forrest A.R."/>
            <person name="Zavolan M."/>
            <person name="Davis M.J."/>
            <person name="Wilming L.G."/>
            <person name="Aidinis V."/>
            <person name="Allen J.E."/>
            <person name="Ambesi-Impiombato A."/>
            <person name="Apweiler R."/>
            <person name="Aturaliya R.N."/>
            <person name="Bailey T.L."/>
            <person name="Bansal M."/>
            <person name="Baxter L."/>
            <person name="Beisel K.W."/>
            <person name="Bersano T."/>
            <person name="Bono H."/>
            <person name="Chalk A.M."/>
            <person name="Chiu K.P."/>
            <person name="Choudhary V."/>
            <person name="Christoffels A."/>
            <person name="Clutterbuck D.R."/>
            <person name="Crowe M.L."/>
            <person name="Dalla E."/>
            <person name="Dalrymple B.P."/>
            <person name="de Bono B."/>
            <person name="Della Gatta G."/>
            <person name="di Bernardo D."/>
            <person name="Down T."/>
            <person name="Engstrom P."/>
            <person name="Fagiolini M."/>
            <person name="Faulkner G."/>
            <person name="Fletcher C.F."/>
            <person name="Fukushima T."/>
            <person name="Furuno M."/>
            <person name="Futaki S."/>
            <person name="Gariboldi M."/>
            <person name="Georgii-Hemming P."/>
            <person name="Gingeras T.R."/>
            <person name="Gojobori T."/>
            <person name="Green R.E."/>
            <person name="Gustincich S."/>
            <person name="Harbers M."/>
            <person name="Hayashi Y."/>
            <person name="Hensch T.K."/>
            <person name="Hirokawa N."/>
            <person name="Hill D."/>
            <person name="Huminiecki L."/>
            <person name="Iacono M."/>
            <person name="Ikeo K."/>
            <person name="Iwama A."/>
            <person name="Ishikawa T."/>
            <person name="Jakt M."/>
            <person name="Kanapin A."/>
            <person name="Katoh M."/>
            <person name="Kawasawa Y."/>
            <person name="Kelso J."/>
            <person name="Kitamura H."/>
            <person name="Kitano H."/>
            <person name="Kollias G."/>
            <person name="Krishnan S.P."/>
            <person name="Kruger A."/>
            <person name="Kummerfeld S.K."/>
            <person name="Kurochkin I.V."/>
            <person name="Lareau L.F."/>
            <person name="Lazarevic D."/>
            <person name="Lipovich L."/>
            <person name="Liu J."/>
            <person name="Liuni S."/>
            <person name="McWilliam S."/>
            <person name="Madan Babu M."/>
            <person name="Madera M."/>
            <person name="Marchionni L."/>
            <person name="Matsuda H."/>
            <person name="Matsuzawa S."/>
            <person name="Miki H."/>
            <person name="Mignone F."/>
            <person name="Miyake S."/>
            <person name="Morris K."/>
            <person name="Mottagui-Tabar S."/>
            <person name="Mulder N."/>
            <person name="Nakano N."/>
            <person name="Nakauchi H."/>
            <person name="Ng P."/>
            <person name="Nilsson R."/>
            <person name="Nishiguchi S."/>
            <person name="Nishikawa S."/>
            <person name="Nori F."/>
            <person name="Ohara O."/>
            <person name="Okazaki Y."/>
            <person name="Orlando V."/>
            <person name="Pang K.C."/>
            <person name="Pavan W.J."/>
            <person name="Pavesi G."/>
            <person name="Pesole G."/>
            <person name="Petrovsky N."/>
            <person name="Piazza S."/>
            <person name="Reed J."/>
            <person name="Reid J.F."/>
            <person name="Ring B.Z."/>
            <person name="Ringwald M."/>
            <person name="Rost B."/>
            <person name="Ruan Y."/>
            <person name="Salzberg S.L."/>
            <person name="Sandelin A."/>
            <person name="Schneider C."/>
            <person name="Schoenbach C."/>
            <person name="Sekiguchi K."/>
            <person name="Semple C.A."/>
            <person name="Seno S."/>
            <person name="Sessa L."/>
            <person name="Sheng Y."/>
            <person name="Shibata Y."/>
            <person name="Shimada H."/>
            <person name="Shimada K."/>
            <person name="Silva D."/>
            <person name="Sinclair B."/>
            <person name="Sperling S."/>
            <person name="Stupka E."/>
            <person name="Sugiura K."/>
            <person name="Sultana R."/>
            <person name="Takenaka Y."/>
            <person name="Taki K."/>
            <person name="Tammoja K."/>
            <person name="Tan S.L."/>
            <person name="Tang S."/>
            <person name="Taylor M.S."/>
            <person name="Tegner J."/>
            <person name="Teichmann S.A."/>
            <person name="Ueda H.R."/>
            <person name="van Nimwegen E."/>
            <person name="Verardo R."/>
            <person name="Wei C.L."/>
            <person name="Yagi K."/>
            <person name="Yamanishi H."/>
            <person name="Zabarovsky E."/>
            <person name="Zhu S."/>
            <person name="Zimmer A."/>
            <person name="Hide W."/>
            <person name="Bult C."/>
            <person name="Grimmond S.M."/>
            <person name="Teasdale R.D."/>
            <person name="Liu E.T."/>
            <person name="Brusic V."/>
            <person name="Quackenbush J."/>
            <person name="Wahlestedt C."/>
            <person name="Mattick J.S."/>
            <person name="Hume D.A."/>
            <person name="Kai C."/>
            <person name="Sasaki D."/>
            <person name="Tomaru Y."/>
            <person name="Fukuda S."/>
            <person name="Kanamori-Katayama M."/>
            <person name="Suzuki M."/>
            <person name="Aoki J."/>
            <person name="Arakawa T."/>
            <person name="Iida J."/>
            <person name="Imamura K."/>
            <person name="Itoh M."/>
            <person name="Kato T."/>
            <person name="Kawaji H."/>
            <person name="Kawagashira N."/>
            <person name="Kawashima T."/>
            <person name="Kojima M."/>
            <person name="Kondo S."/>
            <person name="Konno H."/>
            <person name="Nakano K."/>
            <person name="Ninomiya N."/>
            <person name="Nishio T."/>
            <person name="Okada M."/>
            <person name="Plessy C."/>
            <person name="Shibata K."/>
            <person name="Shiraki T."/>
            <person name="Suzuki S."/>
            <person name="Tagami M."/>
            <person name="Waki K."/>
            <person name="Watahiki A."/>
            <person name="Okamura-Oho Y."/>
            <person name="Suzuki H."/>
            <person name="Kawai J."/>
            <person name="Hayashizaki Y."/>
        </authorList>
    </citation>
    <scope>NUCLEOTIDE SEQUENCE [LARGE SCALE MRNA]</scope>
    <source>
        <strain>C57BL/6J</strain>
    </source>
</reference>
<reference key="2">
    <citation type="journal article" date="2009" name="PLoS Biol.">
        <title>Lineage-specific biology revealed by a finished genome assembly of the mouse.</title>
        <authorList>
            <person name="Church D.M."/>
            <person name="Goodstadt L."/>
            <person name="Hillier L.W."/>
            <person name="Zody M.C."/>
            <person name="Goldstein S."/>
            <person name="She X."/>
            <person name="Bult C.J."/>
            <person name="Agarwala R."/>
            <person name="Cherry J.L."/>
            <person name="DiCuccio M."/>
            <person name="Hlavina W."/>
            <person name="Kapustin Y."/>
            <person name="Meric P."/>
            <person name="Maglott D."/>
            <person name="Birtle Z."/>
            <person name="Marques A.C."/>
            <person name="Graves T."/>
            <person name="Zhou S."/>
            <person name="Teague B."/>
            <person name="Potamousis K."/>
            <person name="Churas C."/>
            <person name="Place M."/>
            <person name="Herschleb J."/>
            <person name="Runnheim R."/>
            <person name="Forrest D."/>
            <person name="Amos-Landgraf J."/>
            <person name="Schwartz D.C."/>
            <person name="Cheng Z."/>
            <person name="Lindblad-Toh K."/>
            <person name="Eichler E.E."/>
            <person name="Ponting C.P."/>
        </authorList>
    </citation>
    <scope>NUCLEOTIDE SEQUENCE [LARGE SCALE GENOMIC DNA]</scope>
    <source>
        <strain>C57BL/6J</strain>
    </source>
</reference>
<reference key="3">
    <citation type="journal article" date="2010" name="Cell">
        <title>A tissue-specific atlas of mouse protein phosphorylation and expression.</title>
        <authorList>
            <person name="Huttlin E.L."/>
            <person name="Jedrychowski M.P."/>
            <person name="Elias J.E."/>
            <person name="Goswami T."/>
            <person name="Rad R."/>
            <person name="Beausoleil S.A."/>
            <person name="Villen J."/>
            <person name="Haas W."/>
            <person name="Sowa M.E."/>
            <person name="Gygi S.P."/>
        </authorList>
    </citation>
    <scope>IDENTIFICATION BY MASS SPECTROMETRY [LARGE SCALE ANALYSIS]</scope>
    <source>
        <tissue>Brain</tissue>
        <tissue>Brown adipose tissue</tissue>
        <tissue>Liver</tissue>
        <tissue>Pancreas</tissue>
        <tissue>Spleen</tissue>
        <tissue>Testis</tissue>
    </source>
</reference>
<reference key="4">
    <citation type="journal article" date="2015" name="J. Biol. Chem.">
        <title>Gemin5 binds to the survival motor neuron mRNA to regulate SMN expression.</title>
        <authorList>
            <person name="Workman E."/>
            <person name="Kalda C."/>
            <person name="Patel A."/>
            <person name="Battle D.J."/>
        </authorList>
    </citation>
    <scope>FUNCTION</scope>
</reference>
<keyword id="KW-0175">Coiled coil</keyword>
<keyword id="KW-0963">Cytoplasm</keyword>
<keyword id="KW-1017">Isopeptide bond</keyword>
<keyword id="KW-0507">mRNA processing</keyword>
<keyword id="KW-0508">mRNA splicing</keyword>
<keyword id="KW-0539">Nucleus</keyword>
<keyword id="KW-0597">Phosphoprotein</keyword>
<keyword id="KW-0648">Protein biosynthesis</keyword>
<keyword id="KW-1185">Reference proteome</keyword>
<keyword id="KW-0677">Repeat</keyword>
<keyword id="KW-0694">RNA-binding</keyword>
<keyword id="KW-0810">Translation regulation</keyword>
<keyword id="KW-0832">Ubl conjugation</keyword>
<keyword id="KW-0853">WD repeat</keyword>
<proteinExistence type="evidence at protein level"/>
<evidence type="ECO:0000250" key="1">
    <source>
        <dbReference type="UniProtKB" id="Q8TEQ6"/>
    </source>
</evidence>
<evidence type="ECO:0000255" key="2"/>
<evidence type="ECO:0000256" key="3">
    <source>
        <dbReference type="SAM" id="MobiDB-lite"/>
    </source>
</evidence>
<evidence type="ECO:0000269" key="4">
    <source>
    </source>
</evidence>
<evidence type="ECO:0000305" key="5"/>
<name>GEMI5_MOUSE</name>
<feature type="chain" id="PRO_0000051005" description="Gem-associated protein 5">
    <location>
        <begin position="1"/>
        <end position="1502"/>
    </location>
</feature>
<feature type="repeat" description="WD 1">
    <location>
        <begin position="62"/>
        <end position="104"/>
    </location>
</feature>
<feature type="repeat" description="WD 2">
    <location>
        <begin position="107"/>
        <end position="148"/>
    </location>
</feature>
<feature type="repeat" description="WD 3">
    <location>
        <begin position="150"/>
        <end position="189"/>
    </location>
</feature>
<feature type="repeat" description="WD 4">
    <location>
        <begin position="193"/>
        <end position="264"/>
    </location>
</feature>
<feature type="repeat" description="WD 5">
    <location>
        <begin position="280"/>
        <end position="321"/>
    </location>
</feature>
<feature type="repeat" description="WD 6">
    <location>
        <begin position="333"/>
        <end position="374"/>
    </location>
</feature>
<feature type="repeat" description="WD 7">
    <location>
        <begin position="377"/>
        <end position="417"/>
    </location>
</feature>
<feature type="repeat" description="WD 8">
    <location>
        <begin position="424"/>
        <end position="464"/>
    </location>
</feature>
<feature type="repeat" description="WD 9">
    <location>
        <begin position="468"/>
        <end position="509"/>
    </location>
</feature>
<feature type="repeat" description="WD 10">
    <location>
        <begin position="533"/>
        <end position="573"/>
    </location>
</feature>
<feature type="repeat" description="WD 11">
    <location>
        <begin position="576"/>
        <end position="622"/>
    </location>
</feature>
<feature type="repeat" description="WD 12">
    <location>
        <begin position="637"/>
        <end position="677"/>
    </location>
</feature>
<feature type="repeat" description="WD 13">
    <location>
        <begin position="680"/>
        <end position="720"/>
    </location>
</feature>
<feature type="region of interest" description="Important for interaction with U1 snRNA" evidence="1">
    <location>
        <begin position="1"/>
        <end position="124"/>
    </location>
</feature>
<feature type="region of interest" description="Interaction with U4 snRNA" evidence="1">
    <location>
        <begin position="13"/>
        <end position="15"/>
    </location>
</feature>
<feature type="region of interest" description="Disordered" evidence="3">
    <location>
        <begin position="740"/>
        <end position="797"/>
    </location>
</feature>
<feature type="region of interest" description="Disordered" evidence="3">
    <location>
        <begin position="819"/>
        <end position="838"/>
    </location>
</feature>
<feature type="region of interest" description="Disordered" evidence="3">
    <location>
        <begin position="1309"/>
        <end position="1338"/>
    </location>
</feature>
<feature type="region of interest" description="Disordered" evidence="3">
    <location>
        <begin position="1378"/>
        <end position="1427"/>
    </location>
</feature>
<feature type="coiled-coil region" evidence="2">
    <location>
        <begin position="1355"/>
        <end position="1382"/>
    </location>
</feature>
<feature type="compositionally biased region" description="Basic and acidic residues" evidence="3">
    <location>
        <begin position="825"/>
        <end position="838"/>
    </location>
</feature>
<feature type="compositionally biased region" description="Polar residues" evidence="3">
    <location>
        <begin position="1380"/>
        <end position="1391"/>
    </location>
</feature>
<feature type="compositionally biased region" description="Basic and acidic residues" evidence="3">
    <location>
        <begin position="1392"/>
        <end position="1407"/>
    </location>
</feature>
<feature type="site" description="Interaction with U4 snRNA" evidence="1">
    <location>
        <position position="33"/>
    </location>
</feature>
<feature type="site" description="Interaction with U4 snRNA" evidence="1">
    <location>
        <position position="284"/>
    </location>
</feature>
<feature type="site" description="Interaction with U4 snRNA" evidence="1">
    <location>
        <position position="335"/>
    </location>
</feature>
<feature type="site" description="Interaction with U4 snRNA" evidence="1">
    <location>
        <position position="359"/>
    </location>
</feature>
<feature type="site" description="Interaction with U4 snRNA" evidence="1">
    <location>
        <position position="381"/>
    </location>
</feature>
<feature type="site" description="Interaction with U4 snRNA" evidence="1">
    <location>
        <position position="422"/>
    </location>
</feature>
<feature type="site" description="Interaction with U4 snRNA" evidence="1">
    <location>
        <position position="426"/>
    </location>
</feature>
<feature type="site" description="Interaction with U4 snRNA" evidence="1">
    <location>
        <position position="470"/>
    </location>
</feature>
<feature type="site" description="Interaction with U4 snRNA and with the 7-methylguanosine cap of RNA molecules" evidence="1">
    <location>
        <position position="474"/>
    </location>
</feature>
<feature type="site" description="Interaction with U4 snRNA" evidence="1">
    <location>
        <position position="556"/>
    </location>
</feature>
<feature type="site" description="Interaction with U4 snRNA" evidence="1">
    <location>
        <position position="579"/>
    </location>
</feature>
<feature type="site" description="Interaction with U4 snRNA and with the 7-methylguanosine cap of RNA molecules" evidence="1">
    <location>
        <position position="641"/>
    </location>
</feature>
<feature type="site" description="Interaction with U4 snRNA and with the 7-methylguanosine cap of RNA molecules" evidence="1">
    <location>
        <position position="660"/>
    </location>
</feature>
<feature type="site" description="Interaction with U4 snRNA and with the 7-methylguanosine cap of RNA molecules" evidence="1">
    <location>
        <position position="684"/>
    </location>
</feature>
<feature type="modified residue" description="Phosphoserine" evidence="1">
    <location>
        <position position="48"/>
    </location>
</feature>
<feature type="modified residue" description="Phosphoserine" evidence="1">
    <location>
        <position position="624"/>
    </location>
</feature>
<feature type="modified residue" description="Phosphoserine" evidence="1">
    <location>
        <position position="757"/>
    </location>
</feature>
<feature type="modified residue" description="Phosphoserine" evidence="1">
    <location>
        <position position="770"/>
    </location>
</feature>
<feature type="modified residue" description="Phosphoserine" evidence="1">
    <location>
        <position position="778"/>
    </location>
</feature>
<feature type="modified residue" description="Phosphoserine" evidence="1">
    <location>
        <position position="845"/>
    </location>
</feature>
<feature type="cross-link" description="Glycyl lysine isopeptide (Lys-Gly) (interchain with G-Cter in SUMO2)" evidence="1">
    <location>
        <position position="754"/>
    </location>
</feature>
<feature type="sequence conflict" description="In Ref. 1; BAC33614." evidence="5" ref="1">
    <original>T</original>
    <variation>A</variation>
    <location>
        <position position="1236"/>
    </location>
</feature>